<keyword id="KW-0025">Alternative splicing</keyword>
<keyword id="KW-0430">Lectin</keyword>
<keyword id="KW-1185">Reference proteome</keyword>
<keyword id="KW-0677">Repeat</keyword>
<evidence type="ECO:0000255" key="1">
    <source>
        <dbReference type="PROSITE-ProRule" id="PRU01088"/>
    </source>
</evidence>
<evidence type="ECO:0000269" key="2">
    <source>
    </source>
</evidence>
<evidence type="ECO:0000305" key="3"/>
<proteinExistence type="evidence at protein level"/>
<feature type="chain" id="PRO_0000072793" description="Jacalin-related lectin 22">
    <location>
        <begin position="1"/>
        <end position="458"/>
    </location>
</feature>
<feature type="domain" description="Jacalin-type lectin 1" evidence="1">
    <location>
        <begin position="5"/>
        <end position="153"/>
    </location>
</feature>
<feature type="domain" description="Jacalin-type lectin 2" evidence="1">
    <location>
        <begin position="160"/>
        <end position="301"/>
    </location>
</feature>
<feature type="domain" description="Jacalin-type lectin 3" evidence="1">
    <location>
        <begin position="311"/>
        <end position="453"/>
    </location>
</feature>
<feature type="splice variant" id="VSP_056719" description="In isoform 2." evidence="3">
    <location>
        <begin position="105"/>
        <end position="134"/>
    </location>
</feature>
<protein>
    <recommendedName>
        <fullName>Jacalin-related lectin 22</fullName>
    </recommendedName>
    <alternativeName>
        <fullName>Myrosinase-binding protein-like At2g39310</fullName>
    </alternativeName>
</protein>
<name>JAL22_ARATH</name>
<organism>
    <name type="scientific">Arabidopsis thaliana</name>
    <name type="common">Mouse-ear cress</name>
    <dbReference type="NCBI Taxonomy" id="3702"/>
    <lineage>
        <taxon>Eukaryota</taxon>
        <taxon>Viridiplantae</taxon>
        <taxon>Streptophyta</taxon>
        <taxon>Embryophyta</taxon>
        <taxon>Tracheophyta</taxon>
        <taxon>Spermatophyta</taxon>
        <taxon>Magnoliopsida</taxon>
        <taxon>eudicotyledons</taxon>
        <taxon>Gunneridae</taxon>
        <taxon>Pentapetalae</taxon>
        <taxon>rosids</taxon>
        <taxon>malvids</taxon>
        <taxon>Brassicales</taxon>
        <taxon>Brassicaceae</taxon>
        <taxon>Camelineae</taxon>
        <taxon>Arabidopsis</taxon>
    </lineage>
</organism>
<reference key="1">
    <citation type="journal article" date="1999" name="Nature">
        <title>Sequence and analysis of chromosome 2 of the plant Arabidopsis thaliana.</title>
        <authorList>
            <person name="Lin X."/>
            <person name="Kaul S."/>
            <person name="Rounsley S.D."/>
            <person name="Shea T.P."/>
            <person name="Benito M.-I."/>
            <person name="Town C.D."/>
            <person name="Fujii C.Y."/>
            <person name="Mason T.M."/>
            <person name="Bowman C.L."/>
            <person name="Barnstead M.E."/>
            <person name="Feldblyum T.V."/>
            <person name="Buell C.R."/>
            <person name="Ketchum K.A."/>
            <person name="Lee J.J."/>
            <person name="Ronning C.M."/>
            <person name="Koo H.L."/>
            <person name="Moffat K.S."/>
            <person name="Cronin L.A."/>
            <person name="Shen M."/>
            <person name="Pai G."/>
            <person name="Van Aken S."/>
            <person name="Umayam L."/>
            <person name="Tallon L.J."/>
            <person name="Gill J.E."/>
            <person name="Adams M.D."/>
            <person name="Carrera A.J."/>
            <person name="Creasy T.H."/>
            <person name="Goodman H.M."/>
            <person name="Somerville C.R."/>
            <person name="Copenhaver G.P."/>
            <person name="Preuss D."/>
            <person name="Nierman W.C."/>
            <person name="White O."/>
            <person name="Eisen J.A."/>
            <person name="Salzberg S.L."/>
            <person name="Fraser C.M."/>
            <person name="Venter J.C."/>
        </authorList>
    </citation>
    <scope>NUCLEOTIDE SEQUENCE [LARGE SCALE GENOMIC DNA]</scope>
    <source>
        <strain>cv. Columbia</strain>
    </source>
</reference>
<reference key="2">
    <citation type="journal article" date="2017" name="Plant J.">
        <title>Araport11: a complete reannotation of the Arabidopsis thaliana reference genome.</title>
        <authorList>
            <person name="Cheng C.Y."/>
            <person name="Krishnakumar V."/>
            <person name="Chan A.P."/>
            <person name="Thibaud-Nissen F."/>
            <person name="Schobel S."/>
            <person name="Town C.D."/>
        </authorList>
    </citation>
    <scope>GENOME REANNOTATION</scope>
    <source>
        <strain>cv. Columbia</strain>
    </source>
</reference>
<reference key="3">
    <citation type="journal article" date="2003" name="Science">
        <title>Empirical analysis of transcriptional activity in the Arabidopsis genome.</title>
        <authorList>
            <person name="Yamada K."/>
            <person name="Lim J."/>
            <person name="Dale J.M."/>
            <person name="Chen H."/>
            <person name="Shinn P."/>
            <person name="Palm C.J."/>
            <person name="Southwick A.M."/>
            <person name="Wu H.C."/>
            <person name="Kim C.J."/>
            <person name="Nguyen M."/>
            <person name="Pham P.K."/>
            <person name="Cheuk R.F."/>
            <person name="Karlin-Newmann G."/>
            <person name="Liu S.X."/>
            <person name="Lam B."/>
            <person name="Sakano H."/>
            <person name="Wu T."/>
            <person name="Yu G."/>
            <person name="Miranda M."/>
            <person name="Quach H.L."/>
            <person name="Tripp M."/>
            <person name="Chang C.H."/>
            <person name="Lee J.M."/>
            <person name="Toriumi M.J."/>
            <person name="Chan M.M."/>
            <person name="Tang C.C."/>
            <person name="Onodera C.S."/>
            <person name="Deng J.M."/>
            <person name="Akiyama K."/>
            <person name="Ansari Y."/>
            <person name="Arakawa T."/>
            <person name="Banh J."/>
            <person name="Banno F."/>
            <person name="Bowser L."/>
            <person name="Brooks S.Y."/>
            <person name="Carninci P."/>
            <person name="Chao Q."/>
            <person name="Choy N."/>
            <person name="Enju A."/>
            <person name="Goldsmith A.D."/>
            <person name="Gurjal M."/>
            <person name="Hansen N.F."/>
            <person name="Hayashizaki Y."/>
            <person name="Johnson-Hopson C."/>
            <person name="Hsuan V.W."/>
            <person name="Iida K."/>
            <person name="Karnes M."/>
            <person name="Khan S."/>
            <person name="Koesema E."/>
            <person name="Ishida J."/>
            <person name="Jiang P.X."/>
            <person name="Jones T."/>
            <person name="Kawai J."/>
            <person name="Kamiya A."/>
            <person name="Meyers C."/>
            <person name="Nakajima M."/>
            <person name="Narusaka M."/>
            <person name="Seki M."/>
            <person name="Sakurai T."/>
            <person name="Satou M."/>
            <person name="Tamse R."/>
            <person name="Vaysberg M."/>
            <person name="Wallender E.K."/>
            <person name="Wong C."/>
            <person name="Yamamura Y."/>
            <person name="Yuan S."/>
            <person name="Shinozaki K."/>
            <person name="Davis R.W."/>
            <person name="Theologis A."/>
            <person name="Ecker J.R."/>
        </authorList>
    </citation>
    <scope>NUCLEOTIDE SEQUENCE [LARGE SCALE MRNA] (ISOFORM 1)</scope>
    <source>
        <strain>cv. Columbia</strain>
    </source>
</reference>
<reference key="4">
    <citation type="journal article" date="2008" name="Plant Cell Physiol.">
        <title>Antagonistic jacalin-related lectins regulate the size of ER body-type beta-glucosidase complexes in Arabidopsis thaliana.</title>
        <authorList>
            <person name="Nagano A.J."/>
            <person name="Fukao Y."/>
            <person name="Fujiwara M."/>
            <person name="Nishimura M."/>
            <person name="Hara-Nishimura I."/>
        </authorList>
    </citation>
    <scope>FUNCTION</scope>
    <scope>IDENTIFICATION IN THE PYK10 COMPLEX</scope>
    <scope>GENE FAMILY</scope>
    <scope>NOMENCLATURE</scope>
    <scope>DISRUPTION PHENOTYPE</scope>
</reference>
<comment type="function">
    <text evidence="2">Inhibitor-type lectin that may regulate the correct polymerization and activation of BGLU23/PYK10 upon tissue damage.</text>
</comment>
<comment type="subunit">
    <text evidence="2">Component of the PYK10 complex, at least composed of PYK10/BGLU23, BGLU21, BGLU22, JAL22, JAL23, PBP1/JAL30, PBP2/JAL31, JAL32, JAL33, JAL34, JAL35, GLL22 and GLL23.</text>
</comment>
<comment type="alternative products">
    <event type="alternative splicing"/>
    <isoform>
        <id>O80950-1</id>
        <name>1</name>
        <sequence type="displayed"/>
    </isoform>
    <isoform>
        <id>O80950-2</id>
        <name>2</name>
        <sequence type="described" ref="VSP_056719"/>
    </isoform>
</comment>
<comment type="disruption phenotype">
    <text evidence="2">Larger PYK10 complexes.</text>
</comment>
<comment type="similarity">
    <text evidence="1 3">Belongs to the jacalin lectin family.</text>
</comment>
<accession>O80950</accession>
<accession>A8MR44</accession>
<sequence length="458" mass="50463">MAKMYRKLALCGGEGGQEWDDDVYEGVRKVYVGQDLNRITYIKFEYVQEDGEVVTTEYGTTNQHPKEFVIQYPDEHIIAVEGSYHQVALIATEVITSLVFKTSKGRKSPLFGPNLLGITTGTKFVFEDEGKKIVGFHGRAGDAVDALGVYFVLDTTPFPLYKLDAQGGTDGRVWDDGSYDGIKTLRIDQDNSRITYLEVEYEKDGEAKTCNHGGKGDTPSEFVLGYPDEYIKSVEATYQKPNIFSNTAITSLKFLTSKGRTSFFGYNVGKKFVLEQKGHRLVGFHGKEDAAIDALGAYFGPVPTPTPLIPSKKLPAIGGNEGVTWDDGVYDGVRKILVGQGNDGVSFVKFEYSKGKDLVPGDDHGKKTLLGAEEFVLEDGEYLMNIDGYYDKIFGVEEPIIVCLQFKTNKRESMPFGMDSGKKFSLGEEGHKIVGFHGQASDVVHSIGVTIVPITTTE</sequence>
<gene>
    <name type="primary">JAL22</name>
    <name type="ordered locus">At2g39310</name>
    <name type="ORF">T16B24.5</name>
</gene>
<dbReference type="EMBL" id="AC004697">
    <property type="protein sequence ID" value="AAC28979.1"/>
    <property type="molecule type" value="Genomic_DNA"/>
</dbReference>
<dbReference type="EMBL" id="CP002685">
    <property type="protein sequence ID" value="AEC09658.1"/>
    <property type="molecule type" value="Genomic_DNA"/>
</dbReference>
<dbReference type="EMBL" id="CP002685">
    <property type="protein sequence ID" value="AEC09659.1"/>
    <property type="molecule type" value="Genomic_DNA"/>
</dbReference>
<dbReference type="EMBL" id="CP002685">
    <property type="protein sequence ID" value="AEC09660.1"/>
    <property type="molecule type" value="Genomic_DNA"/>
</dbReference>
<dbReference type="EMBL" id="CP002685">
    <property type="protein sequence ID" value="ANM61403.1"/>
    <property type="molecule type" value="Genomic_DNA"/>
</dbReference>
<dbReference type="EMBL" id="AY054159">
    <property type="protein sequence ID" value="AAL06820.1"/>
    <property type="molecule type" value="mRNA"/>
</dbReference>
<dbReference type="EMBL" id="AY069884">
    <property type="protein sequence ID" value="AAL47438.1"/>
    <property type="molecule type" value="mRNA"/>
</dbReference>
<dbReference type="EMBL" id="AY142009">
    <property type="protein sequence ID" value="AAM98273.1"/>
    <property type="molecule type" value="mRNA"/>
</dbReference>
<dbReference type="PIR" id="T02571">
    <property type="entry name" value="T02571"/>
</dbReference>
<dbReference type="RefSeq" id="NP_001078021.1">
    <molecule id="O80950-2"/>
    <property type="nucleotide sequence ID" value="NM_001084552.1"/>
</dbReference>
<dbReference type="RefSeq" id="NP_001154564.1">
    <molecule id="O80950-1"/>
    <property type="nucleotide sequence ID" value="NM_001161092.1"/>
</dbReference>
<dbReference type="RefSeq" id="NP_001323620.1">
    <molecule id="O80950-1"/>
    <property type="nucleotide sequence ID" value="NM_001336765.1"/>
</dbReference>
<dbReference type="RefSeq" id="NP_181463.1">
    <molecule id="O80950-1"/>
    <property type="nucleotide sequence ID" value="NM_129488.4"/>
</dbReference>
<dbReference type="SMR" id="O80950"/>
<dbReference type="BioGRID" id="3854">
    <property type="interactions" value="3"/>
</dbReference>
<dbReference type="FunCoup" id="O80950">
    <property type="interactions" value="7"/>
</dbReference>
<dbReference type="STRING" id="3702.O80950"/>
<dbReference type="GlyGen" id="O80950">
    <property type="glycosylation" value="2 sites"/>
</dbReference>
<dbReference type="MetOSite" id="O80950"/>
<dbReference type="PaxDb" id="3702-AT2G39310.1"/>
<dbReference type="ProteomicsDB" id="232260">
    <molecule id="O80950-1"/>
</dbReference>
<dbReference type="EnsemblPlants" id="AT2G39310.1">
    <molecule id="O80950-1"/>
    <property type="protein sequence ID" value="AT2G39310.1"/>
    <property type="gene ID" value="AT2G39310"/>
</dbReference>
<dbReference type="EnsemblPlants" id="AT2G39310.2">
    <molecule id="O80950-2"/>
    <property type="protein sequence ID" value="AT2G39310.2"/>
    <property type="gene ID" value="AT2G39310"/>
</dbReference>
<dbReference type="EnsemblPlants" id="AT2G39310.3">
    <molecule id="O80950-1"/>
    <property type="protein sequence ID" value="AT2G39310.3"/>
    <property type="gene ID" value="AT2G39310"/>
</dbReference>
<dbReference type="EnsemblPlants" id="AT2G39310.4">
    <molecule id="O80950-1"/>
    <property type="protein sequence ID" value="AT2G39310.4"/>
    <property type="gene ID" value="AT2G39310"/>
</dbReference>
<dbReference type="GeneID" id="818516"/>
<dbReference type="Gramene" id="AT2G39310.1">
    <molecule id="O80950-1"/>
    <property type="protein sequence ID" value="AT2G39310.1"/>
    <property type="gene ID" value="AT2G39310"/>
</dbReference>
<dbReference type="Gramene" id="AT2G39310.2">
    <molecule id="O80950-2"/>
    <property type="protein sequence ID" value="AT2G39310.2"/>
    <property type="gene ID" value="AT2G39310"/>
</dbReference>
<dbReference type="Gramene" id="AT2G39310.3">
    <molecule id="O80950-1"/>
    <property type="protein sequence ID" value="AT2G39310.3"/>
    <property type="gene ID" value="AT2G39310"/>
</dbReference>
<dbReference type="Gramene" id="AT2G39310.4">
    <molecule id="O80950-1"/>
    <property type="protein sequence ID" value="AT2G39310.4"/>
    <property type="gene ID" value="AT2G39310"/>
</dbReference>
<dbReference type="KEGG" id="ath:AT2G39310"/>
<dbReference type="Araport" id="AT2G39310"/>
<dbReference type="TAIR" id="AT2G39310">
    <property type="gene designation" value="JAL22"/>
</dbReference>
<dbReference type="eggNOG" id="ENOG502SCUZ">
    <property type="taxonomic scope" value="Eukaryota"/>
</dbReference>
<dbReference type="InParanoid" id="O80950"/>
<dbReference type="OMA" id="FGENGHK"/>
<dbReference type="PhylomeDB" id="O80950"/>
<dbReference type="PRO" id="PR:O80950"/>
<dbReference type="Proteomes" id="UP000006548">
    <property type="component" value="Chromosome 2"/>
</dbReference>
<dbReference type="ExpressionAtlas" id="O80950">
    <property type="expression patterns" value="baseline and differential"/>
</dbReference>
<dbReference type="GO" id="GO:0030246">
    <property type="term" value="F:carbohydrate binding"/>
    <property type="evidence" value="ECO:0007669"/>
    <property type="project" value="UniProtKB-KW"/>
</dbReference>
<dbReference type="CDD" id="cd09612">
    <property type="entry name" value="Jacalin"/>
    <property type="match status" value="3"/>
</dbReference>
<dbReference type="FunFam" id="2.100.10.30:FF:000001">
    <property type="entry name" value="Jacalin-related lectin 33"/>
    <property type="match status" value="3"/>
</dbReference>
<dbReference type="Gene3D" id="2.100.10.30">
    <property type="entry name" value="Jacalin-like lectin domain"/>
    <property type="match status" value="3"/>
</dbReference>
<dbReference type="InterPro" id="IPR001229">
    <property type="entry name" value="Jacalin-like_lectin_dom"/>
</dbReference>
<dbReference type="InterPro" id="IPR033734">
    <property type="entry name" value="Jacalin-like_lectin_dom_plant"/>
</dbReference>
<dbReference type="InterPro" id="IPR036404">
    <property type="entry name" value="Jacalin-like_lectin_dom_sf"/>
</dbReference>
<dbReference type="PANTHER" id="PTHR47293">
    <property type="entry name" value="JACALIN-RELATED LECTIN 3"/>
    <property type="match status" value="1"/>
</dbReference>
<dbReference type="PANTHER" id="PTHR47293:SF27">
    <property type="entry name" value="JACALIN-TYPE LECTIN DOMAIN-CONTAINING PROTEIN"/>
    <property type="match status" value="1"/>
</dbReference>
<dbReference type="Pfam" id="PF01419">
    <property type="entry name" value="Jacalin"/>
    <property type="match status" value="3"/>
</dbReference>
<dbReference type="SMART" id="SM00915">
    <property type="entry name" value="Jacalin"/>
    <property type="match status" value="3"/>
</dbReference>
<dbReference type="SUPFAM" id="SSF51101">
    <property type="entry name" value="Mannose-binding lectins"/>
    <property type="match status" value="3"/>
</dbReference>
<dbReference type="PROSITE" id="PS51752">
    <property type="entry name" value="JACALIN_LECTIN"/>
    <property type="match status" value="3"/>
</dbReference>